<comment type="function">
    <text evidence="6 7 8 10">Metallocarboxypeptidase that mediates deglutamylation of tubulin and non-tubulin target proteins (PubMed:20519502, PubMed:21074048, PubMed:24022482, PubMed:26829768). Catalyzes the removal of polyglutamate side chains present on the gamma-carboxyl group of glutamate residues within the C-terminal tail of alpha- and beta-tubulin (PubMed:20519502, PubMed:21074048, PubMed:24022482). Cleaves alpha- and gamma-linked polyglutamate tubulin side-chain, as well as the branching point glutamate (PubMed:21074048, PubMed:24022482). Also catalyzes the removal of alpha-linked glutamate residues from the carboxy-terminus of alpha-tubulin (PubMed:24022482). Mediates deglutamylation of nucleotidyltransferase CGAS, leading to CGAS antiviral defense response activation (PubMed:26829768).</text>
</comment>
<comment type="catalytic activity">
    <reaction evidence="6 7">
        <text>gamma-L-glutamyl-L-glutamyl-[protein] + H2O = L-glutamyl-[protein] + L-glutamate</text>
        <dbReference type="Rhea" id="RHEA:60152"/>
        <dbReference type="Rhea" id="RHEA-COMP:10208"/>
        <dbReference type="Rhea" id="RHEA-COMP:15517"/>
        <dbReference type="ChEBI" id="CHEBI:15377"/>
        <dbReference type="ChEBI" id="CHEBI:29973"/>
        <dbReference type="ChEBI" id="CHEBI:29985"/>
        <dbReference type="ChEBI" id="CHEBI:143622"/>
    </reaction>
    <physiologicalReaction direction="left-to-right" evidence="16 17">
        <dbReference type="Rhea" id="RHEA:60153"/>
    </physiologicalReaction>
</comment>
<comment type="catalytic activity">
    <reaction evidence="8 10">
        <text>(L-glutamyl)(n+1)-gamma-L-glutamyl-L-glutamyl-[protein] + H2O = (L-glutamyl)(n)-gamma-L-glutamyl-L-glutamyl-[protein] + L-glutamate</text>
        <dbReference type="Rhea" id="RHEA:60004"/>
        <dbReference type="Rhea" id="RHEA-COMP:15519"/>
        <dbReference type="Rhea" id="RHEA-COMP:15675"/>
        <dbReference type="ChEBI" id="CHEBI:15377"/>
        <dbReference type="ChEBI" id="CHEBI:29985"/>
        <dbReference type="ChEBI" id="CHEBI:143623"/>
    </reaction>
    <physiologicalReaction direction="left-to-right" evidence="10 18">
        <dbReference type="Rhea" id="RHEA:60005"/>
    </physiologicalReaction>
</comment>
<comment type="catalytic activity">
    <reaction evidence="8">
        <text>C-terminal L-alpha-aminoacyl-L-glutamyl-[tubulin] + H2O = C-terminal L-alpha-aminoacyl-[tubulin] + L-glutamate</text>
        <dbReference type="Rhea" id="RHEA:63796"/>
        <dbReference type="Rhea" id="RHEA-COMP:16436"/>
        <dbReference type="Rhea" id="RHEA-COMP:16437"/>
        <dbReference type="ChEBI" id="CHEBI:15377"/>
        <dbReference type="ChEBI" id="CHEBI:29985"/>
        <dbReference type="ChEBI" id="CHEBI:90782"/>
        <dbReference type="ChEBI" id="CHEBI:149556"/>
        <dbReference type="EC" id="3.4.17.24"/>
    </reaction>
    <physiologicalReaction direction="left-to-right" evidence="18">
        <dbReference type="Rhea" id="RHEA:63797"/>
    </physiologicalReaction>
</comment>
<comment type="catalytic activity">
    <reaction evidence="8">
        <text>C-terminal L-alpha-aminoacyl-L-glutamyl-L-glutamyl-[tubulin] + H2O = C-terminal L-alpha-aminoacyl-L-glutamyl-[tubulin] + L-glutamate</text>
        <dbReference type="Rhea" id="RHEA:63792"/>
        <dbReference type="Rhea" id="RHEA-COMP:16435"/>
        <dbReference type="Rhea" id="RHEA-COMP:16436"/>
        <dbReference type="ChEBI" id="CHEBI:15377"/>
        <dbReference type="ChEBI" id="CHEBI:29985"/>
        <dbReference type="ChEBI" id="CHEBI:149555"/>
        <dbReference type="ChEBI" id="CHEBI:149556"/>
        <dbReference type="EC" id="3.4.17.24"/>
    </reaction>
    <physiologicalReaction direction="left-to-right" evidence="18">
        <dbReference type="Rhea" id="RHEA:63793"/>
    </physiologicalReaction>
</comment>
<comment type="cofactor">
    <cofactor evidence="1">
        <name>Zn(2+)</name>
        <dbReference type="ChEBI" id="CHEBI:29105"/>
    </cofactor>
    <text evidence="1">Binds 1 zinc ion per subunit.</text>
</comment>
<comment type="subcellular location">
    <subcellularLocation>
        <location evidence="5 8">Cytoplasm</location>
        <location evidence="5 8">Cytosol</location>
    </subcellularLocation>
    <subcellularLocation>
        <location evidence="5">Nucleus</location>
    </subcellularLocation>
    <subcellularLocation>
        <location evidence="2">Cytoplasm</location>
        <location evidence="2">Cytoskeleton</location>
        <location evidence="2">Spindle</location>
    </subcellularLocation>
    <subcellularLocation>
        <location evidence="2">Midbody</location>
    </subcellularLocation>
    <text evidence="2 5">Colocalizes with alpha-tubulin in the mitotic spindle and with midbody microtubules in the intercellular bridges formed during cytokinesis (By similarity). Mainly cytoplasmic. Slight accumulation in the nucleus is observed (PubMed:17244818).</text>
</comment>
<comment type="alternative products">
    <event type="alternative splicing"/>
    <isoform>
        <id>Q09M02-1</id>
        <name>1</name>
        <sequence type="displayed"/>
    </isoform>
    <isoform>
        <id>Q09M02-2</id>
        <name>2</name>
        <sequence type="described" ref="VSP_040433"/>
    </isoform>
    <isoform>
        <id>Q09M02-3</id>
        <name>3</name>
        <sequence type="described" ref="VSP_040432"/>
    </isoform>
    <isoform>
        <id>Q09M02-4</id>
        <name>4</name>
        <sequence type="described" ref="VSP_040434"/>
    </isoform>
    <isoform>
        <id>Q09M02-5</id>
        <name>5</name>
        <sequence type="described" ref="VSP_040427 VSP_040428 VSP_040429 VSP_040430"/>
    </isoform>
    <isoform>
        <id>Q09M02-6</id>
        <name>6</name>
        <sequence type="described" ref="VSP_040431"/>
    </isoform>
    <isoform>
        <id>Q09M02-7</id>
        <name>7</name>
        <sequence type="described" ref="VSP_040428 VSP_040433"/>
    </isoform>
</comment>
<comment type="tissue specificity">
    <text evidence="5 9">Widely expressed. Highly expressed in testis, and moderately in pituitary, brain, eye and kidney.</text>
</comment>
<comment type="disruption phenotype">
    <text evidence="10">Mice are more vulnerable to DNA virus infection due to impaired immune response.</text>
</comment>
<comment type="similarity">
    <text evidence="15">Belongs to the peptidase M14 family.</text>
</comment>
<comment type="sequence caution" evidence="15">
    <conflict type="erroneous initiation">
        <sequence resource="EMBL-CDS" id="AAH57349"/>
    </conflict>
    <text>Truncated N-terminus.</text>
</comment>
<evidence type="ECO:0000250" key="1">
    <source>
        <dbReference type="UniProtKB" id="P00730"/>
    </source>
</evidence>
<evidence type="ECO:0000250" key="2">
    <source>
        <dbReference type="UniProtKB" id="Q8NDL9"/>
    </source>
</evidence>
<evidence type="ECO:0000255" key="3">
    <source>
        <dbReference type="PROSITE-ProRule" id="PRU01379"/>
    </source>
</evidence>
<evidence type="ECO:0000256" key="4">
    <source>
        <dbReference type="SAM" id="MobiDB-lite"/>
    </source>
</evidence>
<evidence type="ECO:0000269" key="5">
    <source>
    </source>
</evidence>
<evidence type="ECO:0000269" key="6">
    <source>
    </source>
</evidence>
<evidence type="ECO:0000269" key="7">
    <source>
    </source>
</evidence>
<evidence type="ECO:0000269" key="8">
    <source>
    </source>
</evidence>
<evidence type="ECO:0000269" key="9">
    <source>
    </source>
</evidence>
<evidence type="ECO:0000269" key="10">
    <source>
    </source>
</evidence>
<evidence type="ECO:0000303" key="11">
    <source>
    </source>
</evidence>
<evidence type="ECO:0000303" key="12">
    <source>
    </source>
</evidence>
<evidence type="ECO:0000303" key="13">
    <source>
    </source>
</evidence>
<evidence type="ECO:0000303" key="14">
    <source>
    </source>
</evidence>
<evidence type="ECO:0000305" key="15"/>
<evidence type="ECO:0000305" key="16">
    <source>
    </source>
</evidence>
<evidence type="ECO:0000305" key="17">
    <source>
    </source>
</evidence>
<evidence type="ECO:0000305" key="18">
    <source>
    </source>
</evidence>
<evidence type="ECO:0000312" key="19">
    <source>
        <dbReference type="MGI" id="MGI:2441745"/>
    </source>
</evidence>
<evidence type="ECO:0007744" key="20">
    <source>
    </source>
</evidence>
<feature type="chain" id="PRO_0000305922" description="Cytosolic carboxypeptidase-like protein 5">
    <location>
        <begin position="1"/>
        <end position="886"/>
    </location>
</feature>
<feature type="domain" description="Peptidase M14" evidence="3">
    <location>
        <begin position="157"/>
        <end position="570"/>
    </location>
</feature>
<feature type="region of interest" description="Disordered" evidence="4">
    <location>
        <begin position="344"/>
        <end position="363"/>
    </location>
</feature>
<feature type="region of interest" description="Disordered" evidence="4">
    <location>
        <begin position="374"/>
        <end position="401"/>
    </location>
</feature>
<feature type="region of interest" description="Disordered" evidence="4">
    <location>
        <begin position="602"/>
        <end position="737"/>
    </location>
</feature>
<feature type="region of interest" description="Disordered" evidence="4">
    <location>
        <begin position="783"/>
        <end position="846"/>
    </location>
</feature>
<feature type="compositionally biased region" description="Polar residues" evidence="4">
    <location>
        <begin position="344"/>
        <end position="353"/>
    </location>
</feature>
<feature type="compositionally biased region" description="Polar residues" evidence="4">
    <location>
        <begin position="621"/>
        <end position="635"/>
    </location>
</feature>
<feature type="compositionally biased region" description="Low complexity" evidence="4">
    <location>
        <begin position="643"/>
        <end position="654"/>
    </location>
</feature>
<feature type="compositionally biased region" description="Polar residues" evidence="4">
    <location>
        <begin position="655"/>
        <end position="666"/>
    </location>
</feature>
<feature type="compositionally biased region" description="Low complexity" evidence="4">
    <location>
        <begin position="714"/>
        <end position="737"/>
    </location>
</feature>
<feature type="compositionally biased region" description="Polar residues" evidence="4">
    <location>
        <begin position="805"/>
        <end position="815"/>
    </location>
</feature>
<feature type="active site" description="Proton donor/acceptor" evidence="3">
    <location>
        <position position="516"/>
    </location>
</feature>
<feature type="binding site" evidence="3 17">
    <location>
        <position position="252"/>
    </location>
    <ligand>
        <name>Zn(2+)</name>
        <dbReference type="ChEBI" id="CHEBI:29105"/>
        <note>catalytic</note>
    </ligand>
</feature>
<feature type="binding site" evidence="3 17">
    <location>
        <position position="255"/>
    </location>
    <ligand>
        <name>Zn(2+)</name>
        <dbReference type="ChEBI" id="CHEBI:29105"/>
        <note>catalytic</note>
    </ligand>
</feature>
<feature type="binding site" evidence="3">
    <location>
        <position position="434"/>
    </location>
    <ligand>
        <name>Zn(2+)</name>
        <dbReference type="ChEBI" id="CHEBI:29105"/>
        <note>catalytic</note>
    </ligand>
</feature>
<feature type="modified residue" description="Phosphoserine" evidence="20">
    <location>
        <position position="841"/>
    </location>
</feature>
<feature type="splice variant" id="VSP_040427" description="In isoform 5." evidence="12">
    <location>
        <begin position="1"/>
        <end position="92"/>
    </location>
</feature>
<feature type="splice variant" id="VSP_040428" description="In isoform 5 and isoform 7." evidence="12 13">
    <original>E</original>
    <variation>ELGSKLSPCFSKPEEAGSHVESVRGRELVK</variation>
    <location>
        <position position="129"/>
    </location>
</feature>
<feature type="splice variant" id="VSP_040429" description="In isoform 5." evidence="12">
    <original>VEN</original>
    <variation>VGL</variation>
    <location>
        <begin position="456"/>
        <end position="458"/>
    </location>
</feature>
<feature type="splice variant" id="VSP_040430" description="In isoform 5." evidence="12">
    <location>
        <begin position="459"/>
        <end position="886"/>
    </location>
</feature>
<feature type="splice variant" id="VSP_040431" description="In isoform 6." evidence="12">
    <original>EPRCSDRRRRQQPLNHRSTTSSLAPSPTLASSGPTSSRNMGSCLLPNSLSLSGSSCSFSSSGDKPEAVMVIGKSLLGAGARIPCIRTRLQARPRLGRSSPPTRRGMRGSSPTSPIPQTRESSELEPGPHSATPGLPQAGPPRPRSAPAFSPISCTLSDSPSRICYSRGLLNQCEVCFVPKSPPLTISPRV</original>
    <variation>GKPVWEPLQQVFGCLGHCWGERA</variation>
    <location>
        <begin position="697"/>
        <end position="886"/>
    </location>
</feature>
<feature type="splice variant" id="VSP_040432" description="In isoform 3." evidence="12 13">
    <original>SSCSFSSSGDKPEAVMVIGKSLLGAGARIPCIRTRLQARPRLGRSSPPTRRGMRGSSPTSPIPQTRESSELEPGPHSATPGLPQAGPPRPRSAPAFSPISCTLSDSPSRICYSRGLLNQCEVCFVPKSPPLTISPRV</original>
    <variation>RYPLPLKPELPTFFPFLPPRA</variation>
    <location>
        <begin position="750"/>
        <end position="886"/>
    </location>
</feature>
<feature type="splice variant" id="VSP_040433" description="In isoform 2 and isoform 7." evidence="12 13">
    <original>ARPRLGRSSPPTRRGMRGSSPTSPIPQTRESSELEPGPHSATPGLPQAGPPRPRSAPAFSPISCTLSDSPSRICYSRGLLNQCEVCFVPKSPPLTISPRV</original>
    <variation>TCQRRVSARRGPGFPRLGPGWAGAHRRLAEG</variation>
    <location>
        <begin position="787"/>
        <end position="886"/>
    </location>
</feature>
<feature type="splice variant" id="VSP_040434" description="In isoform 4." evidence="11 13">
    <original>ARPRLGRSSPPTRRGMRGSSPTSPIPQTRESSELEPGPHSATPGLPQAGPPRPRSAPAFSPISCTLSDSPSRICYSRGLLNQCEVCFVPKSPPLTISPRV</original>
    <variation>TPLSLPDAPQPQPTSFGFPTRP</variation>
    <location>
        <begin position="787"/>
        <end position="886"/>
    </location>
</feature>
<feature type="mutagenesis site" description="Abolishes deglutamylase activity; when associated with Q-255." evidence="7 10">
    <original>H</original>
    <variation>S</variation>
    <location>
        <position position="252"/>
    </location>
</feature>
<feature type="mutagenesis site" description="Abolishes deglutamylase activity; when associated with S-252." evidence="7 10">
    <original>E</original>
    <variation>Q</variation>
    <location>
        <position position="255"/>
    </location>
</feature>
<feature type="sequence conflict" description="In Ref. 2; BAC29150." evidence="15" ref="2">
    <original>S</original>
    <variation>A</variation>
    <location>
        <position position="103"/>
    </location>
</feature>
<feature type="sequence conflict" description="In Ref. 2; BAC28871." evidence="15" ref="2">
    <original>H</original>
    <variation>R</variation>
    <location>
        <position position="337"/>
    </location>
</feature>
<name>CBPC5_MOUSE</name>
<gene>
    <name evidence="19" type="primary">Agbl5</name>
    <name evidence="14" type="synonym">Ccp5</name>
</gene>
<accession>Q09M02</accession>
<accession>D3Z6S8</accession>
<accession>Q09M01</accession>
<accession>Q09M03</accession>
<accession>Q09M04</accession>
<accession>Q6PFZ3</accession>
<accession>Q8BLL9</accession>
<accession>Q8BM52</accession>
<accession>Q8BZD8</accession>
<accession>Q8C0W4</accession>
<keyword id="KW-0025">Alternative splicing</keyword>
<keyword id="KW-0121">Carboxypeptidase</keyword>
<keyword id="KW-0963">Cytoplasm</keyword>
<keyword id="KW-0206">Cytoskeleton</keyword>
<keyword id="KW-0378">Hydrolase</keyword>
<keyword id="KW-0479">Metal-binding</keyword>
<keyword id="KW-0482">Metalloprotease</keyword>
<keyword id="KW-0539">Nucleus</keyword>
<keyword id="KW-0597">Phosphoprotein</keyword>
<keyword id="KW-0645">Protease</keyword>
<keyword id="KW-1185">Reference proteome</keyword>
<keyword id="KW-0862">Zinc</keyword>
<protein>
    <recommendedName>
        <fullName evidence="14">Cytosolic carboxypeptidase-like protein 5</fullName>
        <ecNumber evidence="6 7 8 10">3.4.17.-</ecNumber>
        <ecNumber evidence="8 10">3.4.17.24</ecNumber>
    </recommendedName>
    <alternativeName>
        <fullName>ATP/GTP-binding protein-like 5</fullName>
    </alternativeName>
    <alternativeName>
        <fullName evidence="15">Protein deglutamylase CCP5</fullName>
    </alternativeName>
</protein>
<proteinExistence type="evidence at protein level"/>
<reference key="1">
    <citation type="journal article" date="2007" name="FASEB J.">
        <title>A novel subfamily of mouse cytosolic carboxypeptidases.</title>
        <authorList>
            <person name="Kalinina E."/>
            <person name="Biswas R."/>
            <person name="Berezniuk I."/>
            <person name="Hermoso A."/>
            <person name="Aviles F.X."/>
            <person name="Fricker L.D."/>
        </authorList>
    </citation>
    <scope>NUCLEOTIDE SEQUENCE [MRNA] (ISOFORMS 2; 3; 4 AND 7)</scope>
    <scope>TISSUE SPECIFICITY</scope>
    <scope>SUBCELLULAR LOCATION</scope>
    <source>
        <strain>C57BLKS/J</strain>
    </source>
</reference>
<reference key="2">
    <citation type="journal article" date="2005" name="Science">
        <title>The transcriptional landscape of the mammalian genome.</title>
        <authorList>
            <person name="Carninci P."/>
            <person name="Kasukawa T."/>
            <person name="Katayama S."/>
            <person name="Gough J."/>
            <person name="Frith M.C."/>
            <person name="Maeda N."/>
            <person name="Oyama R."/>
            <person name="Ravasi T."/>
            <person name="Lenhard B."/>
            <person name="Wells C."/>
            <person name="Kodzius R."/>
            <person name="Shimokawa K."/>
            <person name="Bajic V.B."/>
            <person name="Brenner S.E."/>
            <person name="Batalov S."/>
            <person name="Forrest A.R."/>
            <person name="Zavolan M."/>
            <person name="Davis M.J."/>
            <person name="Wilming L.G."/>
            <person name="Aidinis V."/>
            <person name="Allen J.E."/>
            <person name="Ambesi-Impiombato A."/>
            <person name="Apweiler R."/>
            <person name="Aturaliya R.N."/>
            <person name="Bailey T.L."/>
            <person name="Bansal M."/>
            <person name="Baxter L."/>
            <person name="Beisel K.W."/>
            <person name="Bersano T."/>
            <person name="Bono H."/>
            <person name="Chalk A.M."/>
            <person name="Chiu K.P."/>
            <person name="Choudhary V."/>
            <person name="Christoffels A."/>
            <person name="Clutterbuck D.R."/>
            <person name="Crowe M.L."/>
            <person name="Dalla E."/>
            <person name="Dalrymple B.P."/>
            <person name="de Bono B."/>
            <person name="Della Gatta G."/>
            <person name="di Bernardo D."/>
            <person name="Down T."/>
            <person name="Engstrom P."/>
            <person name="Fagiolini M."/>
            <person name="Faulkner G."/>
            <person name="Fletcher C.F."/>
            <person name="Fukushima T."/>
            <person name="Furuno M."/>
            <person name="Futaki S."/>
            <person name="Gariboldi M."/>
            <person name="Georgii-Hemming P."/>
            <person name="Gingeras T.R."/>
            <person name="Gojobori T."/>
            <person name="Green R.E."/>
            <person name="Gustincich S."/>
            <person name="Harbers M."/>
            <person name="Hayashi Y."/>
            <person name="Hensch T.K."/>
            <person name="Hirokawa N."/>
            <person name="Hill D."/>
            <person name="Huminiecki L."/>
            <person name="Iacono M."/>
            <person name="Ikeo K."/>
            <person name="Iwama A."/>
            <person name="Ishikawa T."/>
            <person name="Jakt M."/>
            <person name="Kanapin A."/>
            <person name="Katoh M."/>
            <person name="Kawasawa Y."/>
            <person name="Kelso J."/>
            <person name="Kitamura H."/>
            <person name="Kitano H."/>
            <person name="Kollias G."/>
            <person name="Krishnan S.P."/>
            <person name="Kruger A."/>
            <person name="Kummerfeld S.K."/>
            <person name="Kurochkin I.V."/>
            <person name="Lareau L.F."/>
            <person name="Lazarevic D."/>
            <person name="Lipovich L."/>
            <person name="Liu J."/>
            <person name="Liuni S."/>
            <person name="McWilliam S."/>
            <person name="Madan Babu M."/>
            <person name="Madera M."/>
            <person name="Marchionni L."/>
            <person name="Matsuda H."/>
            <person name="Matsuzawa S."/>
            <person name="Miki H."/>
            <person name="Mignone F."/>
            <person name="Miyake S."/>
            <person name="Morris K."/>
            <person name="Mottagui-Tabar S."/>
            <person name="Mulder N."/>
            <person name="Nakano N."/>
            <person name="Nakauchi H."/>
            <person name="Ng P."/>
            <person name="Nilsson R."/>
            <person name="Nishiguchi S."/>
            <person name="Nishikawa S."/>
            <person name="Nori F."/>
            <person name="Ohara O."/>
            <person name="Okazaki Y."/>
            <person name="Orlando V."/>
            <person name="Pang K.C."/>
            <person name="Pavan W.J."/>
            <person name="Pavesi G."/>
            <person name="Pesole G."/>
            <person name="Petrovsky N."/>
            <person name="Piazza S."/>
            <person name="Reed J."/>
            <person name="Reid J.F."/>
            <person name="Ring B.Z."/>
            <person name="Ringwald M."/>
            <person name="Rost B."/>
            <person name="Ruan Y."/>
            <person name="Salzberg S.L."/>
            <person name="Sandelin A."/>
            <person name="Schneider C."/>
            <person name="Schoenbach C."/>
            <person name="Sekiguchi K."/>
            <person name="Semple C.A."/>
            <person name="Seno S."/>
            <person name="Sessa L."/>
            <person name="Sheng Y."/>
            <person name="Shibata Y."/>
            <person name="Shimada H."/>
            <person name="Shimada K."/>
            <person name="Silva D."/>
            <person name="Sinclair B."/>
            <person name="Sperling S."/>
            <person name="Stupka E."/>
            <person name="Sugiura K."/>
            <person name="Sultana R."/>
            <person name="Takenaka Y."/>
            <person name="Taki K."/>
            <person name="Tammoja K."/>
            <person name="Tan S.L."/>
            <person name="Tang S."/>
            <person name="Taylor M.S."/>
            <person name="Tegner J."/>
            <person name="Teichmann S.A."/>
            <person name="Ueda H.R."/>
            <person name="van Nimwegen E."/>
            <person name="Verardo R."/>
            <person name="Wei C.L."/>
            <person name="Yagi K."/>
            <person name="Yamanishi H."/>
            <person name="Zabarovsky E."/>
            <person name="Zhu S."/>
            <person name="Zimmer A."/>
            <person name="Hide W."/>
            <person name="Bult C."/>
            <person name="Grimmond S.M."/>
            <person name="Teasdale R.D."/>
            <person name="Liu E.T."/>
            <person name="Brusic V."/>
            <person name="Quackenbush J."/>
            <person name="Wahlestedt C."/>
            <person name="Mattick J.S."/>
            <person name="Hume D.A."/>
            <person name="Kai C."/>
            <person name="Sasaki D."/>
            <person name="Tomaru Y."/>
            <person name="Fukuda S."/>
            <person name="Kanamori-Katayama M."/>
            <person name="Suzuki M."/>
            <person name="Aoki J."/>
            <person name="Arakawa T."/>
            <person name="Iida J."/>
            <person name="Imamura K."/>
            <person name="Itoh M."/>
            <person name="Kato T."/>
            <person name="Kawaji H."/>
            <person name="Kawagashira N."/>
            <person name="Kawashima T."/>
            <person name="Kojima M."/>
            <person name="Kondo S."/>
            <person name="Konno H."/>
            <person name="Nakano K."/>
            <person name="Ninomiya N."/>
            <person name="Nishio T."/>
            <person name="Okada M."/>
            <person name="Plessy C."/>
            <person name="Shibata K."/>
            <person name="Shiraki T."/>
            <person name="Suzuki S."/>
            <person name="Tagami M."/>
            <person name="Waki K."/>
            <person name="Watahiki A."/>
            <person name="Okamura-Oho Y."/>
            <person name="Suzuki H."/>
            <person name="Kawai J."/>
            <person name="Hayashizaki Y."/>
        </authorList>
    </citation>
    <scope>NUCLEOTIDE SEQUENCE [LARGE SCALE MRNA] (ISOFORMS 2; 3; 5 AND 6)</scope>
    <source>
        <strain>C57BL/6J</strain>
        <tissue>Brain cortex</tissue>
        <tissue>Embryoid bodies</tissue>
        <tissue>Testis</tissue>
        <tissue>Urinary bladder</tissue>
    </source>
</reference>
<reference key="3">
    <citation type="journal article" date="2009" name="PLoS Biol.">
        <title>Lineage-specific biology revealed by a finished genome assembly of the mouse.</title>
        <authorList>
            <person name="Church D.M."/>
            <person name="Goodstadt L."/>
            <person name="Hillier L.W."/>
            <person name="Zody M.C."/>
            <person name="Goldstein S."/>
            <person name="She X."/>
            <person name="Bult C.J."/>
            <person name="Agarwala R."/>
            <person name="Cherry J.L."/>
            <person name="DiCuccio M."/>
            <person name="Hlavina W."/>
            <person name="Kapustin Y."/>
            <person name="Meric P."/>
            <person name="Maglott D."/>
            <person name="Birtle Z."/>
            <person name="Marques A.C."/>
            <person name="Graves T."/>
            <person name="Zhou S."/>
            <person name="Teague B."/>
            <person name="Potamousis K."/>
            <person name="Churas C."/>
            <person name="Place M."/>
            <person name="Herschleb J."/>
            <person name="Runnheim R."/>
            <person name="Forrest D."/>
            <person name="Amos-Landgraf J."/>
            <person name="Schwartz D.C."/>
            <person name="Cheng Z."/>
            <person name="Lindblad-Toh K."/>
            <person name="Eichler E.E."/>
            <person name="Ponting C.P."/>
        </authorList>
    </citation>
    <scope>NUCLEOTIDE SEQUENCE [LARGE SCALE GENOMIC DNA]</scope>
    <source>
        <strain>C57BL/6J</strain>
    </source>
</reference>
<reference key="4">
    <citation type="journal article" date="2004" name="Genome Res.">
        <title>The status, quality, and expansion of the NIH full-length cDNA project: the Mammalian Gene Collection (MGC).</title>
        <authorList>
            <consortium name="The MGC Project Team"/>
        </authorList>
    </citation>
    <scope>NUCLEOTIDE SEQUENCE [LARGE SCALE MRNA] (ISOFORM 4)</scope>
    <source>
        <strain>C57BL/6J</strain>
        <tissue>Brain</tissue>
    </source>
</reference>
<reference key="5">
    <citation type="journal article" date="2010" name="Cell">
        <title>A tissue-specific atlas of mouse protein phosphorylation and expression.</title>
        <authorList>
            <person name="Huttlin E.L."/>
            <person name="Jedrychowski M.P."/>
            <person name="Elias J.E."/>
            <person name="Goswami T."/>
            <person name="Rad R."/>
            <person name="Beausoleil S.A."/>
            <person name="Villen J."/>
            <person name="Haas W."/>
            <person name="Sowa M.E."/>
            <person name="Gygi S.P."/>
        </authorList>
    </citation>
    <scope>PHOSPHORYLATION [LARGE SCALE ANALYSIS] AT SER-841</scope>
    <scope>IDENTIFICATION BY MASS SPECTROMETRY [LARGE SCALE ANALYSIS]</scope>
    <source>
        <tissue>Testis</tissue>
    </source>
</reference>
<reference key="6">
    <citation type="journal article" date="2010" name="Cell">
        <title>A family of protein-deglutamylating enzymes associated with neurodegeneration.</title>
        <authorList>
            <person name="Rogowski K."/>
            <person name="van Dijk J."/>
            <person name="Magiera M.M."/>
            <person name="Bosc C."/>
            <person name="Deloulme J.C."/>
            <person name="Bosson A."/>
            <person name="Peris L."/>
            <person name="Gold N.D."/>
            <person name="Lacroix B."/>
            <person name="Grau M.B."/>
            <person name="Bec N."/>
            <person name="Larroque C."/>
            <person name="Desagher S."/>
            <person name="Holzer M."/>
            <person name="Andrieux A."/>
            <person name="Moutin M.J."/>
            <person name="Janke C."/>
        </authorList>
    </citation>
    <scope>FUNCTION</scope>
    <scope>CATALYTIC ACTIVITY</scope>
    <scope>MUTAGENESIS OF HIS-252 AND GLU-255</scope>
</reference>
<reference key="7">
    <citation type="journal article" date="2010" name="J. Biol. Chem.">
        <title>Identification of tubulin deglutamylase among Caenorhabditis elegans and mammalian cytosolic carboxypeptidases (CCPs).</title>
        <authorList>
            <person name="Kimura Y."/>
            <person name="Kurabe N."/>
            <person name="Ikegami K."/>
            <person name="Tsutsumi K."/>
            <person name="Konishi Y."/>
            <person name="Kaplan O.I."/>
            <person name="Kunitomo H."/>
            <person name="Iino Y."/>
            <person name="Blacque O.E."/>
            <person name="Setou M."/>
        </authorList>
    </citation>
    <scope>FUNCTION</scope>
    <scope>CATALYTIC ACTIVITY</scope>
</reference>
<reference key="8">
    <citation type="journal article" date="2013" name="J. Biol. Chem.">
        <title>Cytosolic carboxypeptidase 5 removes alpha- and gamma-linked glutamates from tubulin.</title>
        <authorList>
            <person name="Berezniuk I."/>
            <person name="Lyons P.J."/>
            <person name="Sironi J.J."/>
            <person name="Xiao H."/>
            <person name="Setou M."/>
            <person name="Angeletti R.H."/>
            <person name="Ikegami K."/>
            <person name="Fricker L.D."/>
        </authorList>
    </citation>
    <scope>FUNCTION</scope>
    <scope>CATALYTIC ACTIVITY</scope>
</reference>
<reference key="9">
    <citation type="journal article" date="2014" name="Mol. Biol. Cell">
        <title>The cytosolic carboxypeptidases CCP2 and CCP3 catalyze posttranslational removal of acidic amino acids.</title>
        <authorList>
            <person name="Tort O."/>
            <person name="Tanco S."/>
            <person name="Rocha C."/>
            <person name="Bieche I."/>
            <person name="Seixas C."/>
            <person name="Bosc C."/>
            <person name="Andrieux A."/>
            <person name="Moutin M.J."/>
            <person name="Aviles F.X."/>
            <person name="Lorenzo J."/>
            <person name="Janke C."/>
        </authorList>
    </citation>
    <scope>TISSUE SPECIFICITY</scope>
</reference>
<reference key="10">
    <citation type="journal article" date="2016" name="Nat. Immunol.">
        <title>Glutamylation of the DNA sensor cGAS regulates its binding and synthase activity in antiviral immunity.</title>
        <authorList>
            <person name="Xia P."/>
            <person name="Ye B."/>
            <person name="Wang S."/>
            <person name="Zhu X."/>
            <person name="Du Y."/>
            <person name="Xiong Z."/>
            <person name="Tian Y."/>
            <person name="Fan Z."/>
        </authorList>
    </citation>
    <scope>FUNCTION</scope>
    <scope>CATALYTIC ACTIVITY</scope>
    <scope>DISRUPTION PHENOTYPE</scope>
    <scope>MUTAGENESIS OF HIS-252 AND GLU-255</scope>
</reference>
<dbReference type="EC" id="3.4.17.-" evidence="6 7 8 10"/>
<dbReference type="EC" id="3.4.17.24" evidence="8 10"/>
<dbReference type="EMBL" id="DQ867034">
    <property type="protein sequence ID" value="ABI51953.1"/>
    <property type="molecule type" value="mRNA"/>
</dbReference>
<dbReference type="EMBL" id="DQ867035">
    <property type="protein sequence ID" value="ABI51954.1"/>
    <property type="molecule type" value="mRNA"/>
</dbReference>
<dbReference type="EMBL" id="DQ867036">
    <property type="protein sequence ID" value="ABI51955.1"/>
    <property type="molecule type" value="mRNA"/>
</dbReference>
<dbReference type="EMBL" id="DQ867037">
    <property type="protein sequence ID" value="ABI51956.1"/>
    <property type="molecule type" value="mRNA"/>
</dbReference>
<dbReference type="EMBL" id="DQ867038">
    <property type="protein sequence ID" value="ABI51957.1"/>
    <property type="molecule type" value="mRNA"/>
</dbReference>
<dbReference type="EMBL" id="AK029676">
    <property type="protein sequence ID" value="BAC26559.1"/>
    <property type="molecule type" value="mRNA"/>
</dbReference>
<dbReference type="EMBL" id="AK035680">
    <property type="protein sequence ID" value="BAC29150.1"/>
    <property type="molecule type" value="mRNA"/>
</dbReference>
<dbReference type="EMBL" id="AK034894">
    <property type="protein sequence ID" value="BAC28871.1"/>
    <property type="molecule type" value="mRNA"/>
</dbReference>
<dbReference type="EMBL" id="AK044195">
    <property type="protein sequence ID" value="BAC31813.1"/>
    <property type="molecule type" value="mRNA"/>
</dbReference>
<dbReference type="EMBL" id="AC109606">
    <property type="status" value="NOT_ANNOTATED_CDS"/>
    <property type="molecule type" value="Genomic_DNA"/>
</dbReference>
<dbReference type="EMBL" id="BC057349">
    <property type="protein sequence ID" value="AAH57349.1"/>
    <property type="status" value="ALT_INIT"/>
    <property type="molecule type" value="mRNA"/>
</dbReference>
<dbReference type="CCDS" id="CCDS19165.1">
    <molecule id="Q09M02-6"/>
</dbReference>
<dbReference type="CCDS" id="CCDS39048.1">
    <molecule id="Q09M02-7"/>
</dbReference>
<dbReference type="CCDS" id="CCDS80242.1">
    <molecule id="Q09M02-3"/>
</dbReference>
<dbReference type="CCDS" id="CCDS89898.1">
    <molecule id="Q09M02-2"/>
</dbReference>
<dbReference type="RefSeq" id="NP_001041657.1">
    <molecule id="Q09M02-7"/>
    <property type="nucleotide sequence ID" value="NM_001048192.3"/>
</dbReference>
<dbReference type="RefSeq" id="NP_001281191.1">
    <molecule id="Q09M02-3"/>
    <property type="nucleotide sequence ID" value="NM_001294262.2"/>
</dbReference>
<dbReference type="RefSeq" id="NP_001361666.1">
    <molecule id="Q09M02-2"/>
    <property type="nucleotide sequence ID" value="NM_001374737.2"/>
</dbReference>
<dbReference type="RefSeq" id="NP_001395007.1">
    <molecule id="Q09M02-7"/>
    <property type="nucleotide sequence ID" value="NM_001408078.1"/>
</dbReference>
<dbReference type="RefSeq" id="NP_001395010.1">
    <molecule id="Q09M02-3"/>
    <property type="nucleotide sequence ID" value="NM_001408081.1"/>
</dbReference>
<dbReference type="RefSeq" id="NP_001395012.1">
    <molecule id="Q09M02-6"/>
    <property type="nucleotide sequence ID" value="NM_001408083.1"/>
</dbReference>
<dbReference type="RefSeq" id="NP_001395013.1">
    <molecule id="Q09M02-6"/>
    <property type="nucleotide sequence ID" value="NM_001408084.1"/>
</dbReference>
<dbReference type="RefSeq" id="NP_777274.1">
    <molecule id="Q09M02-6"/>
    <property type="nucleotide sequence ID" value="NM_174849.4"/>
</dbReference>
<dbReference type="RefSeq" id="XP_006503938.1">
    <molecule id="Q09M02-1"/>
    <property type="nucleotide sequence ID" value="XM_006503875.3"/>
</dbReference>
<dbReference type="RefSeq" id="XP_006503939.1">
    <molecule id="Q09M02-1"/>
    <property type="nucleotide sequence ID" value="XM_006503876.3"/>
</dbReference>
<dbReference type="RefSeq" id="XP_006503940.1">
    <molecule id="Q09M02-1"/>
    <property type="nucleotide sequence ID" value="XM_006503877.3"/>
</dbReference>
<dbReference type="RefSeq" id="XP_036020910.1">
    <molecule id="Q09M02-1"/>
    <property type="nucleotide sequence ID" value="XM_036165017.1"/>
</dbReference>
<dbReference type="SMR" id="Q09M02"/>
<dbReference type="FunCoup" id="Q09M02">
    <property type="interactions" value="1876"/>
</dbReference>
<dbReference type="STRING" id="10090.ENSMUSP00000110348"/>
<dbReference type="MEROPS" id="M14.036"/>
<dbReference type="GlyGen" id="Q09M02">
    <property type="glycosylation" value="2 sites"/>
</dbReference>
<dbReference type="iPTMnet" id="Q09M02"/>
<dbReference type="PhosphoSitePlus" id="Q09M02"/>
<dbReference type="PaxDb" id="10090-ENSMUSP00000110348"/>
<dbReference type="ProteomicsDB" id="283697">
    <molecule id="Q09M02-1"/>
</dbReference>
<dbReference type="ProteomicsDB" id="283698">
    <molecule id="Q09M02-2"/>
</dbReference>
<dbReference type="ProteomicsDB" id="283699">
    <molecule id="Q09M02-3"/>
</dbReference>
<dbReference type="ProteomicsDB" id="283700">
    <molecule id="Q09M02-4"/>
</dbReference>
<dbReference type="ProteomicsDB" id="283701">
    <molecule id="Q09M02-5"/>
</dbReference>
<dbReference type="ProteomicsDB" id="283702">
    <molecule id="Q09M02-6"/>
</dbReference>
<dbReference type="ProteomicsDB" id="283703">
    <molecule id="Q09M02-7"/>
</dbReference>
<dbReference type="Antibodypedia" id="28106">
    <property type="antibodies" value="154 antibodies from 24 providers"/>
</dbReference>
<dbReference type="DNASU" id="231093"/>
<dbReference type="Ensembl" id="ENSMUST00000069705.11">
    <molecule id="Q09M02-6"/>
    <property type="protein sequence ID" value="ENSMUSP00000063228.5"/>
    <property type="gene ID" value="ENSMUSG00000029165.18"/>
</dbReference>
<dbReference type="Ensembl" id="ENSMUST00000114700.9">
    <molecule id="Q09M02-7"/>
    <property type="protein sequence ID" value="ENSMUSP00000110348.3"/>
    <property type="gene ID" value="ENSMUSG00000029165.18"/>
</dbReference>
<dbReference type="Ensembl" id="ENSMUST00000201168.4">
    <molecule id="Q09M02-1"/>
    <property type="protein sequence ID" value="ENSMUSP00000143808.2"/>
    <property type="gene ID" value="ENSMUSG00000029165.18"/>
</dbReference>
<dbReference type="Ensembl" id="ENSMUST00000201225.4">
    <molecule id="Q09M02-3"/>
    <property type="protein sequence ID" value="ENSMUSP00000143934.2"/>
    <property type="gene ID" value="ENSMUSG00000029165.18"/>
</dbReference>
<dbReference type="Ensembl" id="ENSMUST00000201817.4">
    <molecule id="Q09M02-4"/>
    <property type="protein sequence ID" value="ENSMUSP00000144304.2"/>
    <property type="gene ID" value="ENSMUSG00000029165.18"/>
</dbReference>
<dbReference type="Ensembl" id="ENSMUST00000201917.4">
    <molecule id="Q09M02-2"/>
    <property type="protein sequence ID" value="ENSMUSP00000144188.2"/>
    <property type="gene ID" value="ENSMUSG00000029165.18"/>
</dbReference>
<dbReference type="Ensembl" id="ENSMUST00000202060.4">
    <molecule id="Q09M02-3"/>
    <property type="protein sequence ID" value="ENSMUSP00000144018.2"/>
    <property type="gene ID" value="ENSMUSG00000029165.18"/>
</dbReference>
<dbReference type="GeneID" id="231093"/>
<dbReference type="KEGG" id="mmu:231093"/>
<dbReference type="UCSC" id="uc008wwc.1">
    <molecule id="Q09M02-6"/>
    <property type="organism name" value="mouse"/>
</dbReference>
<dbReference type="UCSC" id="uc008wwd.1">
    <molecule id="Q09M02-5"/>
    <property type="organism name" value="mouse"/>
</dbReference>
<dbReference type="UCSC" id="uc008wwf.2">
    <molecule id="Q09M02-3"/>
    <property type="organism name" value="mouse"/>
</dbReference>
<dbReference type="UCSC" id="uc008wwg.2">
    <molecule id="Q09M02-7"/>
    <property type="organism name" value="mouse"/>
</dbReference>
<dbReference type="AGR" id="MGI:2441745"/>
<dbReference type="CTD" id="60509"/>
<dbReference type="MGI" id="MGI:2441745">
    <property type="gene designation" value="Agbl5"/>
</dbReference>
<dbReference type="VEuPathDB" id="HostDB:ENSMUSG00000029165"/>
<dbReference type="eggNOG" id="KOG3641">
    <property type="taxonomic scope" value="Eukaryota"/>
</dbReference>
<dbReference type="GeneTree" id="ENSGT00940000158032"/>
<dbReference type="HOGENOM" id="CLU_007523_3_2_1"/>
<dbReference type="InParanoid" id="Q09M02"/>
<dbReference type="OMA" id="LMHGCID"/>
<dbReference type="OrthoDB" id="10253041at2759"/>
<dbReference type="PhylomeDB" id="Q09M02"/>
<dbReference type="TreeFam" id="TF324301"/>
<dbReference type="BRENDA" id="3.4.17.24">
    <property type="organism ID" value="3474"/>
</dbReference>
<dbReference type="BioGRID-ORCS" id="231093">
    <property type="hits" value="3 hits in 77 CRISPR screens"/>
</dbReference>
<dbReference type="ChiTaRS" id="Agbl5">
    <property type="organism name" value="mouse"/>
</dbReference>
<dbReference type="PRO" id="PR:Q09M02"/>
<dbReference type="Proteomes" id="UP000000589">
    <property type="component" value="Chromosome 5"/>
</dbReference>
<dbReference type="RNAct" id="Q09M02">
    <property type="molecule type" value="protein"/>
</dbReference>
<dbReference type="Bgee" id="ENSMUSG00000029165">
    <property type="expression patterns" value="Expressed in spermatid and 195 other cell types or tissues"/>
</dbReference>
<dbReference type="ExpressionAtlas" id="Q09M02">
    <property type="expression patterns" value="baseline and differential"/>
</dbReference>
<dbReference type="GO" id="GO:0005829">
    <property type="term" value="C:cytosol"/>
    <property type="evidence" value="ECO:0000314"/>
    <property type="project" value="UniProtKB"/>
</dbReference>
<dbReference type="GO" id="GO:0030496">
    <property type="term" value="C:midbody"/>
    <property type="evidence" value="ECO:0000250"/>
    <property type="project" value="UniProtKB"/>
</dbReference>
<dbReference type="GO" id="GO:0072686">
    <property type="term" value="C:mitotic spindle"/>
    <property type="evidence" value="ECO:0000250"/>
    <property type="project" value="UniProtKB"/>
</dbReference>
<dbReference type="GO" id="GO:0005634">
    <property type="term" value="C:nucleus"/>
    <property type="evidence" value="ECO:0000314"/>
    <property type="project" value="UniProtKB"/>
</dbReference>
<dbReference type="GO" id="GO:0004181">
    <property type="term" value="F:metallocarboxypeptidase activity"/>
    <property type="evidence" value="ECO:0000314"/>
    <property type="project" value="UniProtKB"/>
</dbReference>
<dbReference type="GO" id="GO:0015631">
    <property type="term" value="F:tubulin binding"/>
    <property type="evidence" value="ECO:0000314"/>
    <property type="project" value="UniProtKB"/>
</dbReference>
<dbReference type="GO" id="GO:0008270">
    <property type="term" value="F:zinc ion binding"/>
    <property type="evidence" value="ECO:0007669"/>
    <property type="project" value="InterPro"/>
</dbReference>
<dbReference type="GO" id="GO:0035609">
    <property type="term" value="P:C-terminal protein deglutamylation"/>
    <property type="evidence" value="ECO:0000314"/>
    <property type="project" value="UniProtKB"/>
</dbReference>
<dbReference type="GO" id="GO:0051607">
    <property type="term" value="P:defense response to virus"/>
    <property type="evidence" value="ECO:0000315"/>
    <property type="project" value="UniProtKB"/>
</dbReference>
<dbReference type="GO" id="GO:0035611">
    <property type="term" value="P:protein branching point deglutamylation"/>
    <property type="evidence" value="ECO:0000314"/>
    <property type="project" value="UniProtKB"/>
</dbReference>
<dbReference type="GO" id="GO:0035608">
    <property type="term" value="P:protein deglutamylation"/>
    <property type="evidence" value="ECO:0000314"/>
    <property type="project" value="UniProtKB"/>
</dbReference>
<dbReference type="GO" id="GO:0035610">
    <property type="term" value="P:protein side chain deglutamylation"/>
    <property type="evidence" value="ECO:0000315"/>
    <property type="project" value="UniProtKB"/>
</dbReference>
<dbReference type="GO" id="GO:0006508">
    <property type="term" value="P:proteolysis"/>
    <property type="evidence" value="ECO:0007669"/>
    <property type="project" value="UniProtKB-KW"/>
</dbReference>
<dbReference type="CDD" id="cd06236">
    <property type="entry name" value="M14_AGBL5_like"/>
    <property type="match status" value="1"/>
</dbReference>
<dbReference type="FunFam" id="3.40.630.10:FF:000055">
    <property type="entry name" value="Cytosolic carboxypeptidase-like protein 5 isoform X1"/>
    <property type="match status" value="1"/>
</dbReference>
<dbReference type="FunFam" id="3.40.630.10:FF:000049">
    <property type="entry name" value="cytosolic carboxypeptidase-like protein 5 isoform X1"/>
    <property type="match status" value="1"/>
</dbReference>
<dbReference type="FunFam" id="2.60.40.3120:FF:000002">
    <property type="entry name" value="cytosolic carboxypeptidase-like protein 5 isoform X2"/>
    <property type="match status" value="1"/>
</dbReference>
<dbReference type="Gene3D" id="2.60.40.3120">
    <property type="match status" value="1"/>
</dbReference>
<dbReference type="Gene3D" id="3.40.630.10">
    <property type="entry name" value="Zn peptidases"/>
    <property type="match status" value="2"/>
</dbReference>
<dbReference type="InterPro" id="IPR050821">
    <property type="entry name" value="Cytosolic_carboxypeptidase"/>
</dbReference>
<dbReference type="InterPro" id="IPR034286">
    <property type="entry name" value="M14_AGBL5-like"/>
</dbReference>
<dbReference type="InterPro" id="IPR040626">
    <property type="entry name" value="Pepdidase_M14_N"/>
</dbReference>
<dbReference type="InterPro" id="IPR000834">
    <property type="entry name" value="Peptidase_M14"/>
</dbReference>
<dbReference type="PANTHER" id="PTHR12756">
    <property type="entry name" value="CYTOSOLIC CARBOXYPEPTIDASE"/>
    <property type="match status" value="1"/>
</dbReference>
<dbReference type="PANTHER" id="PTHR12756:SF12">
    <property type="entry name" value="CYTOSOLIC CARBOXYPEPTIDASE-LIKE PROTEIN 5"/>
    <property type="match status" value="1"/>
</dbReference>
<dbReference type="Pfam" id="PF18027">
    <property type="entry name" value="Pepdidase_M14_N"/>
    <property type="match status" value="1"/>
</dbReference>
<dbReference type="Pfam" id="PF00246">
    <property type="entry name" value="Peptidase_M14"/>
    <property type="match status" value="1"/>
</dbReference>
<dbReference type="SUPFAM" id="SSF53187">
    <property type="entry name" value="Zn-dependent exopeptidases"/>
    <property type="match status" value="1"/>
</dbReference>
<dbReference type="PROSITE" id="PS52035">
    <property type="entry name" value="PEPTIDASE_M14"/>
    <property type="match status" value="1"/>
</dbReference>
<organism>
    <name type="scientific">Mus musculus</name>
    <name type="common">Mouse</name>
    <dbReference type="NCBI Taxonomy" id="10090"/>
    <lineage>
        <taxon>Eukaryota</taxon>
        <taxon>Metazoa</taxon>
        <taxon>Chordata</taxon>
        <taxon>Craniata</taxon>
        <taxon>Vertebrata</taxon>
        <taxon>Euteleostomi</taxon>
        <taxon>Mammalia</taxon>
        <taxon>Eutheria</taxon>
        <taxon>Euarchontoglires</taxon>
        <taxon>Glires</taxon>
        <taxon>Rodentia</taxon>
        <taxon>Myomorpha</taxon>
        <taxon>Muroidea</taxon>
        <taxon>Muridae</taxon>
        <taxon>Murinae</taxon>
        <taxon>Mus</taxon>
        <taxon>Mus</taxon>
    </lineage>
</organism>
<sequence>MELRCGGLLFSSRFDSGNLAHVEKVETVSSDGEGVGGVATAPASGSAASPDYEFNVWTRPDCAETEYENGNRSWFYFSVRGGTPGKLIKINIMNMNKQSKLYSQGMAPFVRTLPSRPRWERIRERPTFEMTETQFVLSFVHRFVEGRGATTFFAFCYPFSYSDCQDLLSQLDQRFSENYSTHSSPLDSIYYHRELLCYSLDGLRVDLLTITSCHGLRDDREPRLEQLFPDLGTPRPFRFTGKRIFFLSSRVHPGETPSSFVFNGFLDFILRPDDPRAQTLRRLFVFKLIPMLNPDGVVRGHYRTDSRGVNLNRQYLKPDAVLHPAIYGAKAVLLYHHVHSRLNAKSPTNQQPTLHLPPEAPLSDLEKANNLHNEAHLGQSPDGENPATWPETEPAEEKTDPVWLMPQPIPELEEPAPDTIPPKESGVAYYVDLHGHASKRGCFMYGNSFSDESTQVENMLYPKLISLNSAHFDFQGCNFSEKNMYARDRRDGQSKEGSGRVAIYKASGIIHSYTLECNYNTGRSVNSIPAACHDNGRASPPPPPAFPSRYTVELFEQVGRAMAIAALDMAECNPWPRIVLSEHSSLTNLRAWMLRHVRNSRGLTSAGNMGASKKRGARTPPKSNNSLPVSCSENALSRVRSFSTGTSTGGSSSSQQNSPQMKNSPSFPFHGSRTAGLPGLGSSTQKVSHRVLGPVREPRCSDRRRRQQPLNHRSTTSSLAPSPTLASSGPTSSRNMGSCLLPNSLSLSGSSCSFSSSGDKPEAVMVIGKSLLGAGARIPCIRTRLQARPRLGRSSPPTRRGMRGSSPTSPIPQTRESSELEPGPHSATPGLPQAGPPRPRSAPAFSPISCTLSDSPSRICYSRGLLNQCEVCFVPKSPPLTISPRV</sequence>